<gene>
    <name type="primary">Art7</name>
    <name type="ORF">GE11609</name>
</gene>
<reference key="1">
    <citation type="journal article" date="2007" name="Nature">
        <title>Evolution of genes and genomes on the Drosophila phylogeny.</title>
        <authorList>
            <consortium name="Drosophila 12 genomes consortium"/>
        </authorList>
    </citation>
    <scope>NUCLEOTIDE SEQUENCE [LARGE SCALE GENOMIC DNA]</scope>
    <source>
        <strain>Tai18E2 / Tucson 14021-0261.01</strain>
    </source>
</reference>
<keyword id="KW-0489">Methyltransferase</keyword>
<keyword id="KW-0677">Repeat</keyword>
<keyword id="KW-0949">S-adenosyl-L-methionine</keyword>
<keyword id="KW-0808">Transferase</keyword>
<comment type="function">
    <text evidence="1">Essential arginine methyltransferase that can both catalyze the formation of omega-N monomethylarginine (MMA) and symmetrical dimethylarginine (sDMA). Specifically mediates the symmetrical dimethylation of arginine residues in the small nuclear ribonucleoproteins SmD1 and SmD3 (By similarity).</text>
</comment>
<comment type="similarity">
    <text evidence="2">Belongs to the class I-like SAM-binding methyltransferase superfamily. Protein arginine N-methyltransferase family. PRMT7 subfamily.</text>
</comment>
<organism>
    <name type="scientific">Drosophila yakuba</name>
    <name type="common">Fruit fly</name>
    <dbReference type="NCBI Taxonomy" id="7245"/>
    <lineage>
        <taxon>Eukaryota</taxon>
        <taxon>Metazoa</taxon>
        <taxon>Ecdysozoa</taxon>
        <taxon>Arthropoda</taxon>
        <taxon>Hexapoda</taxon>
        <taxon>Insecta</taxon>
        <taxon>Pterygota</taxon>
        <taxon>Neoptera</taxon>
        <taxon>Endopterygota</taxon>
        <taxon>Diptera</taxon>
        <taxon>Brachycera</taxon>
        <taxon>Muscomorpha</taxon>
        <taxon>Ephydroidea</taxon>
        <taxon>Drosophilidae</taxon>
        <taxon>Drosophila</taxon>
        <taxon>Sophophora</taxon>
    </lineage>
</organism>
<accession>B4P925</accession>
<evidence type="ECO:0000250" key="1"/>
<evidence type="ECO:0000255" key="2">
    <source>
        <dbReference type="PROSITE-ProRule" id="PRU01015"/>
    </source>
</evidence>
<dbReference type="EC" id="2.1.1.-"/>
<dbReference type="EMBL" id="CM000158">
    <property type="protein sequence ID" value="EDW92265.1"/>
    <property type="molecule type" value="Genomic_DNA"/>
</dbReference>
<dbReference type="SMR" id="B4P925"/>
<dbReference type="EnsemblMetazoa" id="FBtr0258127">
    <property type="protein sequence ID" value="FBpp0256619"/>
    <property type="gene ID" value="FBgn0229409"/>
</dbReference>
<dbReference type="EnsemblMetazoa" id="XM_002092517.3">
    <property type="protein sequence ID" value="XP_002092553.2"/>
    <property type="gene ID" value="LOC6531766"/>
</dbReference>
<dbReference type="GeneID" id="6531766"/>
<dbReference type="KEGG" id="dya:Dyak_GE11609"/>
<dbReference type="CTD" id="37664"/>
<dbReference type="eggNOG" id="KOG1501">
    <property type="taxonomic scope" value="Eukaryota"/>
</dbReference>
<dbReference type="HOGENOM" id="CLU_015180_0_0_1"/>
<dbReference type="OMA" id="CHHDEYS"/>
<dbReference type="OrthoDB" id="412876at2759"/>
<dbReference type="PhylomeDB" id="B4P925"/>
<dbReference type="Proteomes" id="UP000002282">
    <property type="component" value="Chromosome 2R"/>
</dbReference>
<dbReference type="GO" id="GO:0042054">
    <property type="term" value="F:histone methyltransferase activity"/>
    <property type="evidence" value="ECO:0007669"/>
    <property type="project" value="TreeGrafter"/>
</dbReference>
<dbReference type="GO" id="GO:0035243">
    <property type="term" value="F:protein-arginine omega-N symmetric methyltransferase activity"/>
    <property type="evidence" value="ECO:0000250"/>
    <property type="project" value="UniProtKB"/>
</dbReference>
<dbReference type="GO" id="GO:0018216">
    <property type="term" value="P:peptidyl-arginine methylation"/>
    <property type="evidence" value="ECO:0000250"/>
    <property type="project" value="UniProtKB"/>
</dbReference>
<dbReference type="CDD" id="cd02440">
    <property type="entry name" value="AdoMet_MTases"/>
    <property type="match status" value="1"/>
</dbReference>
<dbReference type="FunFam" id="2.70.160.11:FF:000014">
    <property type="entry name" value="Protein arginine N-methyltransferase 7"/>
    <property type="match status" value="1"/>
</dbReference>
<dbReference type="FunFam" id="2.70.160.11:FF:000019">
    <property type="entry name" value="Protein arginine N-methyltransferase 7"/>
    <property type="match status" value="1"/>
</dbReference>
<dbReference type="FunFam" id="3.40.50.150:FF:000070">
    <property type="entry name" value="Protein arginine N-methyltransferase 7"/>
    <property type="match status" value="1"/>
</dbReference>
<dbReference type="FunFam" id="3.40.50.150:FF:000071">
    <property type="entry name" value="Protein arginine N-methyltransferase 7"/>
    <property type="match status" value="1"/>
</dbReference>
<dbReference type="Gene3D" id="2.70.160.11">
    <property type="entry name" value="Hnrnp arginine n-methyltransferase1"/>
    <property type="match status" value="2"/>
</dbReference>
<dbReference type="Gene3D" id="3.40.50.150">
    <property type="entry name" value="Vaccinia Virus protein VP39"/>
    <property type="match status" value="2"/>
</dbReference>
<dbReference type="InterPro" id="IPR025799">
    <property type="entry name" value="Arg_MeTrfase"/>
</dbReference>
<dbReference type="InterPro" id="IPR014644">
    <property type="entry name" value="MeTrfase_PRMT7"/>
</dbReference>
<dbReference type="InterPro" id="IPR055135">
    <property type="entry name" value="PRMT_dom"/>
</dbReference>
<dbReference type="InterPro" id="IPR029063">
    <property type="entry name" value="SAM-dependent_MTases_sf"/>
</dbReference>
<dbReference type="PANTHER" id="PTHR11006">
    <property type="entry name" value="PROTEIN ARGININE N-METHYLTRANSFERASE"/>
    <property type="match status" value="1"/>
</dbReference>
<dbReference type="PANTHER" id="PTHR11006:SF4">
    <property type="entry name" value="PROTEIN ARGININE N-METHYLTRANSFERASE 7"/>
    <property type="match status" value="1"/>
</dbReference>
<dbReference type="Pfam" id="PF06325">
    <property type="entry name" value="PrmA"/>
    <property type="match status" value="1"/>
</dbReference>
<dbReference type="Pfam" id="PF22528">
    <property type="entry name" value="PRMT_C"/>
    <property type="match status" value="2"/>
</dbReference>
<dbReference type="PIRSF" id="PIRSF036946">
    <property type="entry name" value="Arg_N-mtase"/>
    <property type="match status" value="1"/>
</dbReference>
<dbReference type="SUPFAM" id="SSF53335">
    <property type="entry name" value="S-adenosyl-L-methionine-dependent methyltransferases"/>
    <property type="match status" value="2"/>
</dbReference>
<dbReference type="PROSITE" id="PS51678">
    <property type="entry name" value="SAM_MT_PRMT"/>
    <property type="match status" value="2"/>
</dbReference>
<name>ANM7_DROYA</name>
<sequence length="690" mass="77704">MSCFSHVMNPITGQNSWQERGDDYDYHLEVANAGFGDMLHDWERNQKYFAALKKTIAGMREAGREVHVLDIGTGTGILSMMAVEAGADSVTACEAFLPMANCAERILAANGAGDKVRLIRKRSTEIQVGEDMPRKANLLVAELLDTELIGEGAIGIYNHAHAELLTEDALCIPARARCYAQVAQSPLAAQWNSLKTIANLDGEPLLHPPEQLKSCQGEAALHDVQLSQLPSSAFRPLTDPVEIFQFDFQRKLEREKQRAQLLTLQSKQPGAAELVFYWWDIQLDDGGEILLSCAPYWAHPQLKELAAEKGKDHPLANVLPWRDHWMQAIYYIPKPLQLVEAGKSFHLSCHHDEYSLWFDAREEAPTKSVRRHTCTCDLHMTYSRSRIGQINQSTRNKRYLRYLEENIEAEKSNVLVLGNGCLLGLASSALGAASVLLHEPHRFSRRLLESIVTHNQLKNVQFLDKVEELEDSQLSALTHVFAEPYFLNAILPWDNFYFGTLLTKIKDRLPESVKISPCSARIYALPVEFLDLHKIRAPVGSCEGFDLRLFDEMVERSAEQAVSLVEAQPLWEYPCRALSEPQEVLNVEFSSFTQEHSLKGSIELKHPGTCNGVALWVDWQLVEENSPRSIVSSGPSEPVVPGEFVKWDMFVRQGVHFPRRPTGGITHLEWSTDFKPVLGELNFSFGQKKL</sequence>
<proteinExistence type="inferred from homology"/>
<protein>
    <recommendedName>
        <fullName>Protein arginine N-methyltransferase 7</fullName>
        <ecNumber>2.1.1.-</ecNumber>
    </recommendedName>
</protein>
<feature type="chain" id="PRO_0000373922" description="Protein arginine N-methyltransferase 7">
    <location>
        <begin position="1"/>
        <end position="690"/>
    </location>
</feature>
<feature type="domain" description="SAM-dependent MTase PRMT-type 1" evidence="2">
    <location>
        <begin position="14"/>
        <end position="357"/>
    </location>
</feature>
<feature type="domain" description="SAM-dependent MTase PRMT-type 2" evidence="2">
    <location>
        <begin position="366"/>
        <end position="690"/>
    </location>
</feature>